<dbReference type="EMBL" id="CP000926">
    <property type="protein sequence ID" value="ABZ00601.1"/>
    <property type="molecule type" value="Genomic_DNA"/>
</dbReference>
<dbReference type="RefSeq" id="WP_012274245.1">
    <property type="nucleotide sequence ID" value="NC_010322.1"/>
</dbReference>
<dbReference type="SMR" id="B0KHY0"/>
<dbReference type="KEGG" id="ppg:PputGB1_4714"/>
<dbReference type="eggNOG" id="COG0779">
    <property type="taxonomic scope" value="Bacteria"/>
</dbReference>
<dbReference type="HOGENOM" id="CLU_070525_1_1_6"/>
<dbReference type="Proteomes" id="UP000002157">
    <property type="component" value="Chromosome"/>
</dbReference>
<dbReference type="GO" id="GO:0005829">
    <property type="term" value="C:cytosol"/>
    <property type="evidence" value="ECO:0007669"/>
    <property type="project" value="TreeGrafter"/>
</dbReference>
<dbReference type="GO" id="GO:0000028">
    <property type="term" value="P:ribosomal small subunit assembly"/>
    <property type="evidence" value="ECO:0007669"/>
    <property type="project" value="TreeGrafter"/>
</dbReference>
<dbReference type="GO" id="GO:0006412">
    <property type="term" value="P:translation"/>
    <property type="evidence" value="ECO:0007669"/>
    <property type="project" value="TreeGrafter"/>
</dbReference>
<dbReference type="CDD" id="cd01734">
    <property type="entry name" value="YlxS_C"/>
    <property type="match status" value="1"/>
</dbReference>
<dbReference type="FunFam" id="3.30.300.70:FF:000001">
    <property type="entry name" value="Ribosome maturation factor RimP"/>
    <property type="match status" value="1"/>
</dbReference>
<dbReference type="Gene3D" id="2.30.30.180">
    <property type="entry name" value="Ribosome maturation factor RimP, C-terminal domain"/>
    <property type="match status" value="1"/>
</dbReference>
<dbReference type="Gene3D" id="3.30.300.70">
    <property type="entry name" value="RimP-like superfamily, N-terminal"/>
    <property type="match status" value="1"/>
</dbReference>
<dbReference type="HAMAP" id="MF_01077">
    <property type="entry name" value="RimP"/>
    <property type="match status" value="1"/>
</dbReference>
<dbReference type="InterPro" id="IPR003728">
    <property type="entry name" value="Ribosome_maturation_RimP"/>
</dbReference>
<dbReference type="InterPro" id="IPR028998">
    <property type="entry name" value="RimP_C"/>
</dbReference>
<dbReference type="InterPro" id="IPR036847">
    <property type="entry name" value="RimP_C_sf"/>
</dbReference>
<dbReference type="InterPro" id="IPR028989">
    <property type="entry name" value="RimP_N"/>
</dbReference>
<dbReference type="InterPro" id="IPR035956">
    <property type="entry name" value="RimP_N_sf"/>
</dbReference>
<dbReference type="NCBIfam" id="NF000927">
    <property type="entry name" value="PRK00092.1-1"/>
    <property type="match status" value="1"/>
</dbReference>
<dbReference type="PANTHER" id="PTHR33867">
    <property type="entry name" value="RIBOSOME MATURATION FACTOR RIMP"/>
    <property type="match status" value="1"/>
</dbReference>
<dbReference type="PANTHER" id="PTHR33867:SF1">
    <property type="entry name" value="RIBOSOME MATURATION FACTOR RIMP"/>
    <property type="match status" value="1"/>
</dbReference>
<dbReference type="Pfam" id="PF17384">
    <property type="entry name" value="DUF150_C"/>
    <property type="match status" value="1"/>
</dbReference>
<dbReference type="Pfam" id="PF02576">
    <property type="entry name" value="RimP_N"/>
    <property type="match status" value="1"/>
</dbReference>
<dbReference type="SUPFAM" id="SSF74942">
    <property type="entry name" value="YhbC-like, C-terminal domain"/>
    <property type="match status" value="1"/>
</dbReference>
<dbReference type="SUPFAM" id="SSF75420">
    <property type="entry name" value="YhbC-like, N-terminal domain"/>
    <property type="match status" value="1"/>
</dbReference>
<proteinExistence type="inferred from homology"/>
<evidence type="ECO:0000255" key="1">
    <source>
        <dbReference type="HAMAP-Rule" id="MF_01077"/>
    </source>
</evidence>
<reference key="1">
    <citation type="submission" date="2008-01" db="EMBL/GenBank/DDBJ databases">
        <title>Complete sequence of Pseudomonas putida GB-1.</title>
        <authorList>
            <consortium name="US DOE Joint Genome Institute"/>
            <person name="Copeland A."/>
            <person name="Lucas S."/>
            <person name="Lapidus A."/>
            <person name="Barry K."/>
            <person name="Glavina del Rio T."/>
            <person name="Dalin E."/>
            <person name="Tice H."/>
            <person name="Pitluck S."/>
            <person name="Bruce D."/>
            <person name="Goodwin L."/>
            <person name="Chertkov O."/>
            <person name="Brettin T."/>
            <person name="Detter J.C."/>
            <person name="Han C."/>
            <person name="Kuske C.R."/>
            <person name="Schmutz J."/>
            <person name="Larimer F."/>
            <person name="Land M."/>
            <person name="Hauser L."/>
            <person name="Kyrpides N."/>
            <person name="Kim E."/>
            <person name="McCarthy J.K."/>
            <person name="Richardson P."/>
        </authorList>
    </citation>
    <scope>NUCLEOTIDE SEQUENCE [LARGE SCALE GENOMIC DNA]</scope>
    <source>
        <strain>GB-1</strain>
    </source>
</reference>
<comment type="function">
    <text evidence="1">Required for maturation of 30S ribosomal subunits.</text>
</comment>
<comment type="subcellular location">
    <subcellularLocation>
        <location evidence="1">Cytoplasm</location>
    </subcellularLocation>
</comment>
<comment type="similarity">
    <text evidence="1">Belongs to the RimP family.</text>
</comment>
<feature type="chain" id="PRO_1000084531" description="Ribosome maturation factor RimP">
    <location>
        <begin position="1"/>
        <end position="152"/>
    </location>
</feature>
<accession>B0KHY0</accession>
<organism>
    <name type="scientific">Pseudomonas putida (strain GB-1)</name>
    <dbReference type="NCBI Taxonomy" id="76869"/>
    <lineage>
        <taxon>Bacteria</taxon>
        <taxon>Pseudomonadati</taxon>
        <taxon>Pseudomonadota</taxon>
        <taxon>Gammaproteobacteria</taxon>
        <taxon>Pseudomonadales</taxon>
        <taxon>Pseudomonadaceae</taxon>
        <taxon>Pseudomonas</taxon>
    </lineage>
</organism>
<name>RIMP_PSEPG</name>
<sequence length="152" mass="16925">MSSKLEQLQALLAPVVEGLGYQCWGIEYVSQGKHSVLRIYIDKEGGILVEDCEAVSRQASAILDVEDPISSEYTLEVSSPGMDRPLFTLEQFASHAGEQVKIKLRSPFEGRRNFQGLLRGVEEQDVVVQVDNQEFLLPIDSIDKANIIPSFD</sequence>
<gene>
    <name evidence="1" type="primary">rimP</name>
    <name type="ordered locus">PputGB1_4714</name>
</gene>
<keyword id="KW-0963">Cytoplasm</keyword>
<keyword id="KW-0690">Ribosome biogenesis</keyword>
<protein>
    <recommendedName>
        <fullName evidence="1">Ribosome maturation factor RimP</fullName>
    </recommendedName>
</protein>